<proteinExistence type="inferred from homology"/>
<dbReference type="EC" id="1.9.6.1" evidence="1"/>
<dbReference type="EMBL" id="CP000744">
    <property type="protein sequence ID" value="ABR83935.1"/>
    <property type="molecule type" value="Genomic_DNA"/>
</dbReference>
<dbReference type="RefSeq" id="WP_012076670.1">
    <property type="nucleotide sequence ID" value="NC_009656.1"/>
</dbReference>
<dbReference type="SMR" id="A6V924"/>
<dbReference type="KEGG" id="pap:PSPA7_4205"/>
<dbReference type="HOGENOM" id="CLU_000422_13_4_6"/>
<dbReference type="Proteomes" id="UP000001582">
    <property type="component" value="Chromosome"/>
</dbReference>
<dbReference type="GO" id="GO:0016020">
    <property type="term" value="C:membrane"/>
    <property type="evidence" value="ECO:0007669"/>
    <property type="project" value="TreeGrafter"/>
</dbReference>
<dbReference type="GO" id="GO:0009325">
    <property type="term" value="C:nitrate reductase complex"/>
    <property type="evidence" value="ECO:0007669"/>
    <property type="project" value="TreeGrafter"/>
</dbReference>
<dbReference type="GO" id="GO:0042597">
    <property type="term" value="C:periplasmic space"/>
    <property type="evidence" value="ECO:0007669"/>
    <property type="project" value="UniProtKB-SubCell"/>
</dbReference>
<dbReference type="GO" id="GO:0051539">
    <property type="term" value="F:4 iron, 4 sulfur cluster binding"/>
    <property type="evidence" value="ECO:0007669"/>
    <property type="project" value="UniProtKB-KW"/>
</dbReference>
<dbReference type="GO" id="GO:0009055">
    <property type="term" value="F:electron transfer activity"/>
    <property type="evidence" value="ECO:0007669"/>
    <property type="project" value="UniProtKB-UniRule"/>
</dbReference>
<dbReference type="GO" id="GO:0005506">
    <property type="term" value="F:iron ion binding"/>
    <property type="evidence" value="ECO:0007669"/>
    <property type="project" value="UniProtKB-UniRule"/>
</dbReference>
<dbReference type="GO" id="GO:0030151">
    <property type="term" value="F:molybdenum ion binding"/>
    <property type="evidence" value="ECO:0007669"/>
    <property type="project" value="InterPro"/>
</dbReference>
<dbReference type="GO" id="GO:0043546">
    <property type="term" value="F:molybdopterin cofactor binding"/>
    <property type="evidence" value="ECO:0007669"/>
    <property type="project" value="InterPro"/>
</dbReference>
<dbReference type="GO" id="GO:0050140">
    <property type="term" value="F:nitrate reductase (cytochrome) activity"/>
    <property type="evidence" value="ECO:0007669"/>
    <property type="project" value="UniProtKB-EC"/>
</dbReference>
<dbReference type="GO" id="GO:0045333">
    <property type="term" value="P:cellular respiration"/>
    <property type="evidence" value="ECO:0007669"/>
    <property type="project" value="UniProtKB-ARBA"/>
</dbReference>
<dbReference type="GO" id="GO:0006777">
    <property type="term" value="P:Mo-molybdopterin cofactor biosynthetic process"/>
    <property type="evidence" value="ECO:0007669"/>
    <property type="project" value="UniProtKB-UniRule"/>
</dbReference>
<dbReference type="GO" id="GO:0042128">
    <property type="term" value="P:nitrate assimilation"/>
    <property type="evidence" value="ECO:0007669"/>
    <property type="project" value="UniProtKB-UniRule"/>
</dbReference>
<dbReference type="CDD" id="cd02791">
    <property type="entry name" value="MopB_CT_Nitrate-R-NapA-like"/>
    <property type="match status" value="1"/>
</dbReference>
<dbReference type="CDD" id="cd02754">
    <property type="entry name" value="MopB_Nitrate-R-NapA-like"/>
    <property type="match status" value="1"/>
</dbReference>
<dbReference type="FunFam" id="2.40.40.20:FF:000005">
    <property type="entry name" value="Periplasmic nitrate reductase"/>
    <property type="match status" value="1"/>
</dbReference>
<dbReference type="Gene3D" id="2.40.40.20">
    <property type="match status" value="1"/>
</dbReference>
<dbReference type="Gene3D" id="3.30.200.210">
    <property type="match status" value="1"/>
</dbReference>
<dbReference type="Gene3D" id="3.40.50.740">
    <property type="match status" value="1"/>
</dbReference>
<dbReference type="Gene3D" id="3.40.228.10">
    <property type="entry name" value="Dimethylsulfoxide Reductase, domain 2"/>
    <property type="match status" value="1"/>
</dbReference>
<dbReference type="HAMAP" id="MF_01630">
    <property type="entry name" value="Nitrate_reduct_NapA"/>
    <property type="match status" value="1"/>
</dbReference>
<dbReference type="InterPro" id="IPR009010">
    <property type="entry name" value="Asp_de-COase-like_dom_sf"/>
</dbReference>
<dbReference type="InterPro" id="IPR041957">
    <property type="entry name" value="CT_Nitrate-R-NapA-like"/>
</dbReference>
<dbReference type="InterPro" id="IPR006657">
    <property type="entry name" value="MoPterin_dinucl-bd_dom"/>
</dbReference>
<dbReference type="InterPro" id="IPR006656">
    <property type="entry name" value="Mopterin_OxRdtase"/>
</dbReference>
<dbReference type="InterPro" id="IPR006963">
    <property type="entry name" value="Mopterin_OxRdtase_4Fe-4S_dom"/>
</dbReference>
<dbReference type="InterPro" id="IPR027467">
    <property type="entry name" value="MopterinOxRdtase_cofactor_BS"/>
</dbReference>
<dbReference type="InterPro" id="IPR010051">
    <property type="entry name" value="Periplasm_NO3_reductase_lsu"/>
</dbReference>
<dbReference type="InterPro" id="IPR050123">
    <property type="entry name" value="Prok_molybdopt-oxidoreductase"/>
</dbReference>
<dbReference type="InterPro" id="IPR006311">
    <property type="entry name" value="TAT_signal"/>
</dbReference>
<dbReference type="NCBIfam" id="TIGR01706">
    <property type="entry name" value="NAPA"/>
    <property type="match status" value="1"/>
</dbReference>
<dbReference type="NCBIfam" id="NF010055">
    <property type="entry name" value="PRK13532.1"/>
    <property type="match status" value="1"/>
</dbReference>
<dbReference type="PANTHER" id="PTHR43105:SF11">
    <property type="entry name" value="PERIPLASMIC NITRATE REDUCTASE"/>
    <property type="match status" value="1"/>
</dbReference>
<dbReference type="PANTHER" id="PTHR43105">
    <property type="entry name" value="RESPIRATORY NITRATE REDUCTASE"/>
    <property type="match status" value="1"/>
</dbReference>
<dbReference type="Pfam" id="PF04879">
    <property type="entry name" value="Molybdop_Fe4S4"/>
    <property type="match status" value="1"/>
</dbReference>
<dbReference type="Pfam" id="PF00384">
    <property type="entry name" value="Molybdopterin"/>
    <property type="match status" value="1"/>
</dbReference>
<dbReference type="Pfam" id="PF01568">
    <property type="entry name" value="Molydop_binding"/>
    <property type="match status" value="1"/>
</dbReference>
<dbReference type="SMART" id="SM00926">
    <property type="entry name" value="Molybdop_Fe4S4"/>
    <property type="match status" value="1"/>
</dbReference>
<dbReference type="SUPFAM" id="SSF50692">
    <property type="entry name" value="ADC-like"/>
    <property type="match status" value="1"/>
</dbReference>
<dbReference type="SUPFAM" id="SSF53706">
    <property type="entry name" value="Formate dehydrogenase/DMSO reductase, domains 1-3"/>
    <property type="match status" value="1"/>
</dbReference>
<dbReference type="PROSITE" id="PS51669">
    <property type="entry name" value="4FE4S_MOW_BIS_MGD"/>
    <property type="match status" value="1"/>
</dbReference>
<dbReference type="PROSITE" id="PS00551">
    <property type="entry name" value="MOLYBDOPTERIN_PROK_1"/>
    <property type="match status" value="1"/>
</dbReference>
<dbReference type="PROSITE" id="PS51318">
    <property type="entry name" value="TAT"/>
    <property type="match status" value="1"/>
</dbReference>
<name>NAPA_PSEP7</name>
<gene>
    <name evidence="1" type="primary">napA</name>
    <name type="ordered locus">PSPA7_4205</name>
</gene>
<sequence length="834" mass="93510">MNLTRREFAKANAAAIAAAAAGLPILVRASNLVTEADVTSLDWNKAPCRFCGTGCSVMVATRDGQVVATHGDIKAEVNRGINCVKGYFLSKIMYGSDRLTRPLLRMKDGKFDKQGEFQPISWEQAFDIMAEKFKAALKAKGPESVGMFGSGQWTVWEGYAANKLFKAGLRSNNIDPNARHCMASAVMGFMRSFGMDEPMGCYDDIEATDSFVLWGSNMAEMHPVLWSRVTDRRLSAPQVKVAVLSTFEHRSFELADIPMVFKPQTDLIILNYIANHIIESGAVNRDFVERHVRFAHGAEDIGYGLRPDDPLEKKAKNADKANTWSDIDFNAFAEFVKPYTLERAARESGVPAERLKALAELYAAPRRKVVSFWTMGFNQHTRGVWANNLIYNIHLLTGKISEPGNSPFSLTGQPSACGTAREVGTFSHRLPADLVVTNPKHRETAEKIWKVPAGTIQEKVGFHAVQQSRMLKDGVLNVYWTQVSNNMQAGPNVMQEVLPGWRNPDNFVIVSDVYPTVSAQAADLILPSAMWVEKEGAFGNAERRTQFWHQLVKAPGEAKSDLWQLVEFSKRFTTDEVWPAELLAKAPELKGKTLYEVLFRNGQVDRFPASDLAKGYANDEVDAFGFYIQKGLFEEYAAFGRGHGHDLAPFDAYHEARGLRWPVVDGKETRWRYREGYDPYVSKGSGVQFYGYPDKKAIVFALPYEPPAEAPDRDYPFWLATGRVLEHWHTGSMTARVPELYKAVPDAVVYMHPDDARQLKLRRGSEVRVVSRRGEIRARVETRGRNKPPQGLVFVPFFDANKLINKVTLDATDPISKQTDYKKCAVRIELLNLA</sequence>
<feature type="signal peptide" description="Tat-type signal" evidence="1">
    <location>
        <begin position="1"/>
        <end position="29"/>
    </location>
</feature>
<feature type="chain" id="PRO_1000069722" description="Periplasmic nitrate reductase" evidence="1">
    <location>
        <begin position="30"/>
        <end position="834"/>
    </location>
</feature>
<feature type="domain" description="4Fe-4S Mo/W bis-MGD-type" evidence="1">
    <location>
        <begin position="41"/>
        <end position="97"/>
    </location>
</feature>
<feature type="binding site" evidence="1">
    <location>
        <position position="48"/>
    </location>
    <ligand>
        <name>[4Fe-4S] cluster</name>
        <dbReference type="ChEBI" id="CHEBI:49883"/>
    </ligand>
</feature>
<feature type="binding site" evidence="1">
    <location>
        <position position="51"/>
    </location>
    <ligand>
        <name>[4Fe-4S] cluster</name>
        <dbReference type="ChEBI" id="CHEBI:49883"/>
    </ligand>
</feature>
<feature type="binding site" evidence="1">
    <location>
        <position position="55"/>
    </location>
    <ligand>
        <name>[4Fe-4S] cluster</name>
        <dbReference type="ChEBI" id="CHEBI:49883"/>
    </ligand>
</feature>
<feature type="binding site" evidence="1">
    <location>
        <position position="83"/>
    </location>
    <ligand>
        <name>[4Fe-4S] cluster</name>
        <dbReference type="ChEBI" id="CHEBI:49883"/>
    </ligand>
</feature>
<feature type="binding site" evidence="1">
    <location>
        <position position="85"/>
    </location>
    <ligand>
        <name>Mo-bis(molybdopterin guanine dinucleotide)</name>
        <dbReference type="ChEBI" id="CHEBI:60539"/>
    </ligand>
</feature>
<feature type="binding site" evidence="1">
    <location>
        <position position="152"/>
    </location>
    <ligand>
        <name>Mo-bis(molybdopterin guanine dinucleotide)</name>
        <dbReference type="ChEBI" id="CHEBI:60539"/>
    </ligand>
</feature>
<feature type="binding site" evidence="1">
    <location>
        <position position="177"/>
    </location>
    <ligand>
        <name>Mo-bis(molybdopterin guanine dinucleotide)</name>
        <dbReference type="ChEBI" id="CHEBI:60539"/>
    </ligand>
</feature>
<feature type="binding site" evidence="1">
    <location>
        <position position="181"/>
    </location>
    <ligand>
        <name>Mo-bis(molybdopterin guanine dinucleotide)</name>
        <dbReference type="ChEBI" id="CHEBI:60539"/>
    </ligand>
</feature>
<feature type="binding site" evidence="1">
    <location>
        <begin position="214"/>
        <end position="221"/>
    </location>
    <ligand>
        <name>Mo-bis(molybdopterin guanine dinucleotide)</name>
        <dbReference type="ChEBI" id="CHEBI:60539"/>
    </ligand>
</feature>
<feature type="binding site" evidence="1">
    <location>
        <begin position="245"/>
        <end position="249"/>
    </location>
    <ligand>
        <name>Mo-bis(molybdopterin guanine dinucleotide)</name>
        <dbReference type="ChEBI" id="CHEBI:60539"/>
    </ligand>
</feature>
<feature type="binding site" evidence="1">
    <location>
        <begin position="264"/>
        <end position="266"/>
    </location>
    <ligand>
        <name>Mo-bis(molybdopterin guanine dinucleotide)</name>
        <dbReference type="ChEBI" id="CHEBI:60539"/>
    </ligand>
</feature>
<feature type="binding site" evidence="1">
    <location>
        <position position="375"/>
    </location>
    <ligand>
        <name>Mo-bis(molybdopterin guanine dinucleotide)</name>
        <dbReference type="ChEBI" id="CHEBI:60539"/>
    </ligand>
</feature>
<feature type="binding site" evidence="1">
    <location>
        <position position="379"/>
    </location>
    <ligand>
        <name>Mo-bis(molybdopterin guanine dinucleotide)</name>
        <dbReference type="ChEBI" id="CHEBI:60539"/>
    </ligand>
</feature>
<feature type="binding site" evidence="1">
    <location>
        <position position="485"/>
    </location>
    <ligand>
        <name>Mo-bis(molybdopterin guanine dinucleotide)</name>
        <dbReference type="ChEBI" id="CHEBI:60539"/>
    </ligand>
</feature>
<feature type="binding site" evidence="1">
    <location>
        <begin position="511"/>
        <end position="512"/>
    </location>
    <ligand>
        <name>Mo-bis(molybdopterin guanine dinucleotide)</name>
        <dbReference type="ChEBI" id="CHEBI:60539"/>
    </ligand>
</feature>
<feature type="binding site" evidence="1">
    <location>
        <position position="534"/>
    </location>
    <ligand>
        <name>Mo-bis(molybdopterin guanine dinucleotide)</name>
        <dbReference type="ChEBI" id="CHEBI:60539"/>
    </ligand>
</feature>
<feature type="binding site" evidence="1">
    <location>
        <position position="561"/>
    </location>
    <ligand>
        <name>Mo-bis(molybdopterin guanine dinucleotide)</name>
        <dbReference type="ChEBI" id="CHEBI:60539"/>
    </ligand>
</feature>
<feature type="binding site" evidence="1">
    <location>
        <begin position="721"/>
        <end position="730"/>
    </location>
    <ligand>
        <name>Mo-bis(molybdopterin guanine dinucleotide)</name>
        <dbReference type="ChEBI" id="CHEBI:60539"/>
    </ligand>
</feature>
<feature type="binding site" evidence="1">
    <location>
        <position position="797"/>
    </location>
    <ligand>
        <name>substrate</name>
    </ligand>
</feature>
<feature type="binding site" evidence="1">
    <location>
        <position position="805"/>
    </location>
    <ligand>
        <name>Mo-bis(molybdopterin guanine dinucleotide)</name>
        <dbReference type="ChEBI" id="CHEBI:60539"/>
    </ligand>
</feature>
<feature type="binding site" evidence="1">
    <location>
        <position position="822"/>
    </location>
    <ligand>
        <name>Mo-bis(molybdopterin guanine dinucleotide)</name>
        <dbReference type="ChEBI" id="CHEBI:60539"/>
    </ligand>
</feature>
<comment type="function">
    <text evidence="1">Catalytic subunit of the periplasmic nitrate reductase complex NapAB. Receives electrons from NapB and catalyzes the reduction of nitrate to nitrite.</text>
</comment>
<comment type="catalytic activity">
    <reaction evidence="1">
        <text>2 Fe(II)-[cytochrome] + nitrate + 2 H(+) = 2 Fe(III)-[cytochrome] + nitrite + H2O</text>
        <dbReference type="Rhea" id="RHEA:12909"/>
        <dbReference type="Rhea" id="RHEA-COMP:11777"/>
        <dbReference type="Rhea" id="RHEA-COMP:11778"/>
        <dbReference type="ChEBI" id="CHEBI:15377"/>
        <dbReference type="ChEBI" id="CHEBI:15378"/>
        <dbReference type="ChEBI" id="CHEBI:16301"/>
        <dbReference type="ChEBI" id="CHEBI:17632"/>
        <dbReference type="ChEBI" id="CHEBI:29033"/>
        <dbReference type="ChEBI" id="CHEBI:29034"/>
        <dbReference type="EC" id="1.9.6.1"/>
    </reaction>
</comment>
<comment type="cofactor">
    <cofactor evidence="1">
        <name>[4Fe-4S] cluster</name>
        <dbReference type="ChEBI" id="CHEBI:49883"/>
    </cofactor>
    <text evidence="1">Binds 1 [4Fe-4S] cluster.</text>
</comment>
<comment type="cofactor">
    <cofactor evidence="1">
        <name>Mo-bis(molybdopterin guanine dinucleotide)</name>
        <dbReference type="ChEBI" id="CHEBI:60539"/>
    </cofactor>
    <text evidence="1">Binds 1 molybdenum-bis(molybdopterin guanine dinucleotide) (Mo-bis-MGD) cofactor per subunit.</text>
</comment>
<comment type="subunit">
    <text evidence="1">Component of the periplasmic nitrate reductase NapAB complex composed of NapA and NapB.</text>
</comment>
<comment type="subcellular location">
    <subcellularLocation>
        <location evidence="1">Periplasm</location>
    </subcellularLocation>
</comment>
<comment type="PTM">
    <text evidence="1">Predicted to be exported by the Tat system. The position of the signal peptide cleavage has not been experimentally proven.</text>
</comment>
<comment type="similarity">
    <text evidence="1">Belongs to the prokaryotic molybdopterin-containing oxidoreductase family. NasA/NapA/NarB subfamily.</text>
</comment>
<protein>
    <recommendedName>
        <fullName evidence="1">Periplasmic nitrate reductase</fullName>
        <ecNumber evidence="1">1.9.6.1</ecNumber>
    </recommendedName>
</protein>
<organism>
    <name type="scientific">Pseudomonas paraeruginosa (strain DSM 24068 / PA7)</name>
    <name type="common">Pseudomonas aeruginosa (strain PA7)</name>
    <dbReference type="NCBI Taxonomy" id="381754"/>
    <lineage>
        <taxon>Bacteria</taxon>
        <taxon>Pseudomonadati</taxon>
        <taxon>Pseudomonadota</taxon>
        <taxon>Gammaproteobacteria</taxon>
        <taxon>Pseudomonadales</taxon>
        <taxon>Pseudomonadaceae</taxon>
        <taxon>Pseudomonas</taxon>
        <taxon>Pseudomonas paraeruginosa</taxon>
    </lineage>
</organism>
<accession>A6V924</accession>
<reference key="1">
    <citation type="submission" date="2007-06" db="EMBL/GenBank/DDBJ databases">
        <authorList>
            <person name="Dodson R.J."/>
            <person name="Harkins D."/>
            <person name="Paulsen I.T."/>
        </authorList>
    </citation>
    <scope>NUCLEOTIDE SEQUENCE [LARGE SCALE GENOMIC DNA]</scope>
    <source>
        <strain>DSM 24068 / PA7</strain>
    </source>
</reference>
<keyword id="KW-0004">4Fe-4S</keyword>
<keyword id="KW-0249">Electron transport</keyword>
<keyword id="KW-0408">Iron</keyword>
<keyword id="KW-0411">Iron-sulfur</keyword>
<keyword id="KW-0479">Metal-binding</keyword>
<keyword id="KW-0500">Molybdenum</keyword>
<keyword id="KW-0534">Nitrate assimilation</keyword>
<keyword id="KW-0560">Oxidoreductase</keyword>
<keyword id="KW-0574">Periplasm</keyword>
<keyword id="KW-0732">Signal</keyword>
<keyword id="KW-0813">Transport</keyword>
<evidence type="ECO:0000255" key="1">
    <source>
        <dbReference type="HAMAP-Rule" id="MF_01630"/>
    </source>
</evidence>